<proteinExistence type="inferred from homology"/>
<evidence type="ECO:0000255" key="1">
    <source>
        <dbReference type="HAMAP-Rule" id="MF_00393"/>
    </source>
</evidence>
<gene>
    <name evidence="1" type="primary">plsB</name>
    <name type="ordered locus">SSPA3761</name>
</gene>
<name>PLSB_SALPK</name>
<reference key="1">
    <citation type="journal article" date="2009" name="BMC Genomics">
        <title>Pseudogene accumulation in the evolutionary histories of Salmonella enterica serovars Paratyphi A and Typhi.</title>
        <authorList>
            <person name="Holt K.E."/>
            <person name="Thomson N.R."/>
            <person name="Wain J."/>
            <person name="Langridge G.C."/>
            <person name="Hasan R."/>
            <person name="Bhutta Z.A."/>
            <person name="Quail M.A."/>
            <person name="Norbertczak H."/>
            <person name="Walker D."/>
            <person name="Simmonds M."/>
            <person name="White B."/>
            <person name="Bason N."/>
            <person name="Mungall K."/>
            <person name="Dougan G."/>
            <person name="Parkhill J."/>
        </authorList>
    </citation>
    <scope>NUCLEOTIDE SEQUENCE [LARGE SCALE GENOMIC DNA]</scope>
    <source>
        <strain>AKU_12601</strain>
    </source>
</reference>
<protein>
    <recommendedName>
        <fullName evidence="1">Glycerol-3-phosphate acyltransferase</fullName>
        <shortName evidence="1">GPAT</shortName>
        <ecNumber evidence="1">2.3.1.15</ecNumber>
    </recommendedName>
</protein>
<organism>
    <name type="scientific">Salmonella paratyphi A (strain AKU_12601)</name>
    <dbReference type="NCBI Taxonomy" id="554290"/>
    <lineage>
        <taxon>Bacteria</taxon>
        <taxon>Pseudomonadati</taxon>
        <taxon>Pseudomonadota</taxon>
        <taxon>Gammaproteobacteria</taxon>
        <taxon>Enterobacterales</taxon>
        <taxon>Enterobacteriaceae</taxon>
        <taxon>Salmonella</taxon>
    </lineage>
</organism>
<keyword id="KW-0012">Acyltransferase</keyword>
<keyword id="KW-0997">Cell inner membrane</keyword>
<keyword id="KW-1003">Cell membrane</keyword>
<keyword id="KW-0444">Lipid biosynthesis</keyword>
<keyword id="KW-0443">Lipid metabolism</keyword>
<keyword id="KW-0472">Membrane</keyword>
<keyword id="KW-0594">Phospholipid biosynthesis</keyword>
<keyword id="KW-1208">Phospholipid metabolism</keyword>
<keyword id="KW-0808">Transferase</keyword>
<comment type="catalytic activity">
    <reaction evidence="1">
        <text>sn-glycerol 3-phosphate + an acyl-CoA = a 1-acyl-sn-glycero-3-phosphate + CoA</text>
        <dbReference type="Rhea" id="RHEA:15325"/>
        <dbReference type="ChEBI" id="CHEBI:57287"/>
        <dbReference type="ChEBI" id="CHEBI:57597"/>
        <dbReference type="ChEBI" id="CHEBI:57970"/>
        <dbReference type="ChEBI" id="CHEBI:58342"/>
        <dbReference type="EC" id="2.3.1.15"/>
    </reaction>
</comment>
<comment type="pathway">
    <text evidence="1">Phospholipid metabolism; CDP-diacylglycerol biosynthesis; CDP-diacylglycerol from sn-glycerol 3-phosphate: step 1/3.</text>
</comment>
<comment type="subcellular location">
    <subcellularLocation>
        <location evidence="1">Cell inner membrane</location>
        <topology evidence="1">Peripheral membrane protein</topology>
        <orientation evidence="1">Cytoplasmic side</orientation>
    </subcellularLocation>
</comment>
<comment type="domain">
    <text evidence="1">The HXXXXD motif is essential for acyltransferase activity and may constitute the binding site for the phosphate moiety of the glycerol-3-phosphate.</text>
</comment>
<comment type="similarity">
    <text evidence="1">Belongs to the GPAT/DAPAT family.</text>
</comment>
<feature type="chain" id="PRO_1000123095" description="Glycerol-3-phosphate acyltransferase">
    <location>
        <begin position="1"/>
        <end position="806"/>
    </location>
</feature>
<feature type="short sequence motif" description="HXXXXD motif">
    <location>
        <begin position="305"/>
        <end position="310"/>
    </location>
</feature>
<sequence>MSGWPRIYYKLLNLPLSILVKSKSIPAEPAQELGLDTSRPIMYVLPYNSKADLLTLRAQCLAHDLPDPLEPLEIDGALLPRYVFIHGGPRVFTYYTPKEESVKLFHDYLDLHRSNPALDVQMVPVSVMFGRAPGREKGEENPPLRMLNGVQKFFAISWLGRDSFVRFSPSVSLRRMADEHGTDKIIAQKLARVARMHFARQRLAAVGPRLPARQDLFNKLLASKAIARAVEDEARSKKISHEKAQQNAIALMEEIAANFSYEMIRLTDRILGFTWNRLYQGINVHNAERVRQLAHDGHEIVYVPCHRSHMDYLLLSYVLYHQGLVPPHIAAGINLNFWPAGPIFRRLGAFFIRRTFKGNKLYSTVFREYLGELFSRGYSVEYFVEGGRSRTGRLLDPKTGTLSMTIQAMLRGGTRPITLVPIYIGYEHVMEVGTYAKELRGATKEKESLPQMLKGLSKLRNLGQGYVNFGEPMPLMTYLNQHVPEWRESIDPIEAIRPAWLTPTVNSIAADLMVRINNAGAANAMNLCCTALLASRQRSLTREQLTEQLDCYLDLMRNVPYSTDSTVPAASAGELIAHALQMNKFEVEKDTIGDIIILPREQAVLMTYYRNNIAHMLIMPSLMAAIITQHRRISRDALQQHVEALYPMLKAELFLRWEREELASVIDALASEMQRQGLITLQDDELHINPTHSRTLQLLAAGARETLQRYAITFWLLSANPSINRSTLEKESRTVAQRLSVLHGINAPEFFDKAVFSSLVLTLRDEGYISDTGDAEPAETMKIYQMLADLITSDVRLTIESATQGE</sequence>
<dbReference type="EC" id="2.3.1.15" evidence="1"/>
<dbReference type="EMBL" id="FM200053">
    <property type="protein sequence ID" value="CAR62045.1"/>
    <property type="molecule type" value="Genomic_DNA"/>
</dbReference>
<dbReference type="RefSeq" id="WP_000017366.1">
    <property type="nucleotide sequence ID" value="NC_011147.1"/>
</dbReference>
<dbReference type="SMR" id="B5BJV8"/>
<dbReference type="KEGG" id="sek:SSPA3761"/>
<dbReference type="HOGENOM" id="CLU_015407_0_0_6"/>
<dbReference type="UniPathway" id="UPA00557">
    <property type="reaction ID" value="UER00612"/>
</dbReference>
<dbReference type="Proteomes" id="UP000001869">
    <property type="component" value="Chromosome"/>
</dbReference>
<dbReference type="GO" id="GO:0005886">
    <property type="term" value="C:plasma membrane"/>
    <property type="evidence" value="ECO:0007669"/>
    <property type="project" value="UniProtKB-SubCell"/>
</dbReference>
<dbReference type="GO" id="GO:0004366">
    <property type="term" value="F:glycerol-3-phosphate O-acyltransferase activity"/>
    <property type="evidence" value="ECO:0007669"/>
    <property type="project" value="UniProtKB-UniRule"/>
</dbReference>
<dbReference type="GO" id="GO:0016024">
    <property type="term" value="P:CDP-diacylglycerol biosynthetic process"/>
    <property type="evidence" value="ECO:0007669"/>
    <property type="project" value="UniProtKB-UniRule"/>
</dbReference>
<dbReference type="GO" id="GO:0006631">
    <property type="term" value="P:fatty acid metabolic process"/>
    <property type="evidence" value="ECO:0007669"/>
    <property type="project" value="TreeGrafter"/>
</dbReference>
<dbReference type="CDD" id="cd07993">
    <property type="entry name" value="LPLAT_DHAPAT-like"/>
    <property type="match status" value="1"/>
</dbReference>
<dbReference type="HAMAP" id="MF_00393">
    <property type="entry name" value="Glyc3P_acyltrans"/>
    <property type="match status" value="1"/>
</dbReference>
<dbReference type="InterPro" id="IPR022284">
    <property type="entry name" value="GPAT/DHAPAT"/>
</dbReference>
<dbReference type="InterPro" id="IPR045520">
    <property type="entry name" value="GPAT/DHAPAT_C"/>
</dbReference>
<dbReference type="InterPro" id="IPR041728">
    <property type="entry name" value="GPAT/DHAPAT_LPLAT"/>
</dbReference>
<dbReference type="InterPro" id="IPR028354">
    <property type="entry name" value="GPAT_PlsB"/>
</dbReference>
<dbReference type="InterPro" id="IPR002123">
    <property type="entry name" value="Plipid/glycerol_acylTrfase"/>
</dbReference>
<dbReference type="NCBIfam" id="TIGR03703">
    <property type="entry name" value="plsB"/>
    <property type="match status" value="1"/>
</dbReference>
<dbReference type="NCBIfam" id="NF003441">
    <property type="entry name" value="PRK04974.1"/>
    <property type="match status" value="1"/>
</dbReference>
<dbReference type="PANTHER" id="PTHR12563:SF17">
    <property type="entry name" value="DIHYDROXYACETONE PHOSPHATE ACYLTRANSFERASE"/>
    <property type="match status" value="1"/>
</dbReference>
<dbReference type="PANTHER" id="PTHR12563">
    <property type="entry name" value="GLYCEROL-3-PHOSPHATE ACYLTRANSFERASE"/>
    <property type="match status" value="1"/>
</dbReference>
<dbReference type="Pfam" id="PF01553">
    <property type="entry name" value="Acyltransferase"/>
    <property type="match status" value="1"/>
</dbReference>
<dbReference type="Pfam" id="PF19277">
    <property type="entry name" value="GPAT_C"/>
    <property type="match status" value="1"/>
</dbReference>
<dbReference type="PIRSF" id="PIRSF500064">
    <property type="entry name" value="GPAT"/>
    <property type="match status" value="1"/>
</dbReference>
<dbReference type="PIRSF" id="PIRSF000437">
    <property type="entry name" value="GPAT_DHAPAT"/>
    <property type="match status" value="1"/>
</dbReference>
<dbReference type="SMART" id="SM00563">
    <property type="entry name" value="PlsC"/>
    <property type="match status" value="1"/>
</dbReference>
<dbReference type="SUPFAM" id="SSF69593">
    <property type="entry name" value="Glycerol-3-phosphate (1)-acyltransferase"/>
    <property type="match status" value="1"/>
</dbReference>
<accession>B5BJV8</accession>